<dbReference type="EMBL" id="Z31697">
    <property type="protein sequence ID" value="CAA83502.1"/>
    <property type="molecule type" value="mRNA"/>
</dbReference>
<dbReference type="PIR" id="S43177">
    <property type="entry name" value="S43177"/>
</dbReference>
<dbReference type="SMR" id="Q25423"/>
<dbReference type="VEuPathDB" id="TriTrypDB:LtaPh_1503261"/>
<dbReference type="OrthoDB" id="185373at2759"/>
<dbReference type="PhylomeDB" id="Q25423"/>
<dbReference type="GO" id="GO:0005743">
    <property type="term" value="C:mitochondrial inner membrane"/>
    <property type="evidence" value="ECO:0007669"/>
    <property type="project" value="UniProtKB-SubCell"/>
</dbReference>
<dbReference type="GO" id="GO:0016491">
    <property type="term" value="F:oxidoreductase activity"/>
    <property type="evidence" value="ECO:0007669"/>
    <property type="project" value="UniProtKB-KW"/>
</dbReference>
<dbReference type="GO" id="GO:0003723">
    <property type="term" value="F:RNA binding"/>
    <property type="evidence" value="ECO:0007669"/>
    <property type="project" value="UniProtKB-KW"/>
</dbReference>
<dbReference type="Gene3D" id="1.25.40.10">
    <property type="entry name" value="Tetratricopeptide repeat domain"/>
    <property type="match status" value="1"/>
</dbReference>
<dbReference type="InterPro" id="IPR011990">
    <property type="entry name" value="TPR-like_helical_dom_sf"/>
</dbReference>
<feature type="transit peptide" description="Mitochondrion" evidence="2">
    <location>
        <begin position="1"/>
        <end position="17"/>
    </location>
</feature>
<feature type="chain" id="PRO_0000021980" description="Protein P18, mitochondrial">
    <location>
        <begin position="18"/>
        <end position="187"/>
    </location>
</feature>
<feature type="region of interest" description="Disordered" evidence="1">
    <location>
        <begin position="160"/>
        <end position="187"/>
    </location>
</feature>
<protein>
    <recommendedName>
        <fullName>Protein P18, mitochondrial</fullName>
    </recommendedName>
</protein>
<keyword id="KW-0903">Direct protein sequencing</keyword>
<keyword id="KW-0472">Membrane</keyword>
<keyword id="KW-0496">Mitochondrion</keyword>
<keyword id="KW-0999">Mitochondrion inner membrane</keyword>
<keyword id="KW-0520">NAD</keyword>
<keyword id="KW-0560">Oxidoreductase</keyword>
<keyword id="KW-0694">RNA-binding</keyword>
<keyword id="KW-0809">Transit peptide</keyword>
<proteinExistence type="evidence at protein level"/>
<reference key="1">
    <citation type="journal article" date="1995" name="Mol. Biochem. Parasitol.">
        <title>Characterization of two nuclear-encoded protein components of mitochondrial ribonucleoprotein complexes from Leishmania tarentolae.</title>
        <authorList>
            <person name="Bringaud F."/>
            <person name="Peris M."/>
            <person name="Zen K.H."/>
            <person name="Simpson L."/>
        </authorList>
    </citation>
    <scope>NUCLEOTIDE SEQUENCE [MRNA]</scope>
    <scope>PROTEIN SEQUENCE OF 18-34</scope>
    <source>
        <strain>UC</strain>
    </source>
</reference>
<organism>
    <name type="scientific">Leishmania tarentolae</name>
    <name type="common">Sauroleishmania tarentolae</name>
    <dbReference type="NCBI Taxonomy" id="5689"/>
    <lineage>
        <taxon>Eukaryota</taxon>
        <taxon>Discoba</taxon>
        <taxon>Euglenozoa</taxon>
        <taxon>Kinetoplastea</taxon>
        <taxon>Metakinetoplastina</taxon>
        <taxon>Trypanosomatida</taxon>
        <taxon>Trypanosomatidae</taxon>
        <taxon>Leishmaniinae</taxon>
        <taxon>Leishmania</taxon>
        <taxon>lizard Leishmania</taxon>
    </lineage>
</organism>
<sequence>MRRLSSQLMCTAAAVRFASAGGAKKYDLFGYEVDTNTAPWIEKVKKCRYYDEAGEVLVSMNVKNCPPDLETYNATLQKIFEAPSKQEKPVENESKFCAMMDLMEEMQHRNKVKPNEESWTWVMKECVQSGQFRLGYCVAKLMEAEFKRVPEDLVKQNEANAAKAKADGKEHPSTLAQQQSLFDIKIQ</sequence>
<name>P18_LEITA</name>
<evidence type="ECO:0000256" key="1">
    <source>
        <dbReference type="SAM" id="MobiDB-lite"/>
    </source>
</evidence>
<evidence type="ECO:0000269" key="2">
    <source>
    </source>
</evidence>
<comment type="function">
    <text>Putative RNA-binding protein.</text>
</comment>
<comment type="subcellular location">
    <subcellularLocation>
        <location>Mitochondrion inner membrane</location>
    </subcellularLocation>
</comment>
<accession>Q25423</accession>